<gene>
    <name evidence="1" type="primary">rnhA</name>
    <name type="ordered locus">FTF0590</name>
</gene>
<dbReference type="EC" id="3.1.26.4" evidence="1"/>
<dbReference type="EMBL" id="AM286280">
    <property type="protein sequence ID" value="CAL08606.1"/>
    <property type="status" value="ALT_INIT"/>
    <property type="molecule type" value="Genomic_DNA"/>
</dbReference>
<dbReference type="RefSeq" id="WP_003015471.1">
    <property type="nucleotide sequence ID" value="NC_008245.1"/>
</dbReference>
<dbReference type="SMR" id="Q14IN1"/>
<dbReference type="GeneID" id="75265176"/>
<dbReference type="KEGG" id="ftf:FTF0590"/>
<dbReference type="HOGENOM" id="CLU_030894_6_0_6"/>
<dbReference type="GO" id="GO:0005737">
    <property type="term" value="C:cytoplasm"/>
    <property type="evidence" value="ECO:0007669"/>
    <property type="project" value="UniProtKB-SubCell"/>
</dbReference>
<dbReference type="GO" id="GO:0000287">
    <property type="term" value="F:magnesium ion binding"/>
    <property type="evidence" value="ECO:0007669"/>
    <property type="project" value="UniProtKB-UniRule"/>
</dbReference>
<dbReference type="GO" id="GO:0003676">
    <property type="term" value="F:nucleic acid binding"/>
    <property type="evidence" value="ECO:0007669"/>
    <property type="project" value="InterPro"/>
</dbReference>
<dbReference type="GO" id="GO:0004523">
    <property type="term" value="F:RNA-DNA hybrid ribonuclease activity"/>
    <property type="evidence" value="ECO:0007669"/>
    <property type="project" value="UniProtKB-UniRule"/>
</dbReference>
<dbReference type="GO" id="GO:0043137">
    <property type="term" value="P:DNA replication, removal of RNA primer"/>
    <property type="evidence" value="ECO:0007669"/>
    <property type="project" value="TreeGrafter"/>
</dbReference>
<dbReference type="CDD" id="cd09278">
    <property type="entry name" value="RNase_HI_prokaryote_like"/>
    <property type="match status" value="1"/>
</dbReference>
<dbReference type="FunFam" id="3.30.420.10:FF:000089">
    <property type="entry name" value="Ribonuclease H"/>
    <property type="match status" value="1"/>
</dbReference>
<dbReference type="Gene3D" id="3.30.420.10">
    <property type="entry name" value="Ribonuclease H-like superfamily/Ribonuclease H"/>
    <property type="match status" value="1"/>
</dbReference>
<dbReference type="HAMAP" id="MF_00042">
    <property type="entry name" value="RNase_H"/>
    <property type="match status" value="1"/>
</dbReference>
<dbReference type="InterPro" id="IPR050092">
    <property type="entry name" value="RNase_H"/>
</dbReference>
<dbReference type="InterPro" id="IPR012337">
    <property type="entry name" value="RNaseH-like_sf"/>
</dbReference>
<dbReference type="InterPro" id="IPR002156">
    <property type="entry name" value="RNaseH_domain"/>
</dbReference>
<dbReference type="InterPro" id="IPR036397">
    <property type="entry name" value="RNaseH_sf"/>
</dbReference>
<dbReference type="InterPro" id="IPR022892">
    <property type="entry name" value="RNaseHI"/>
</dbReference>
<dbReference type="NCBIfam" id="NF001236">
    <property type="entry name" value="PRK00203.1"/>
    <property type="match status" value="1"/>
</dbReference>
<dbReference type="PANTHER" id="PTHR10642">
    <property type="entry name" value="RIBONUCLEASE H1"/>
    <property type="match status" value="1"/>
</dbReference>
<dbReference type="PANTHER" id="PTHR10642:SF26">
    <property type="entry name" value="RIBONUCLEASE H1"/>
    <property type="match status" value="1"/>
</dbReference>
<dbReference type="Pfam" id="PF00075">
    <property type="entry name" value="RNase_H"/>
    <property type="match status" value="1"/>
</dbReference>
<dbReference type="SUPFAM" id="SSF53098">
    <property type="entry name" value="Ribonuclease H-like"/>
    <property type="match status" value="1"/>
</dbReference>
<dbReference type="PROSITE" id="PS50879">
    <property type="entry name" value="RNASE_H_1"/>
    <property type="match status" value="1"/>
</dbReference>
<accession>Q14IN1</accession>
<keyword id="KW-0963">Cytoplasm</keyword>
<keyword id="KW-0255">Endonuclease</keyword>
<keyword id="KW-0378">Hydrolase</keyword>
<keyword id="KW-0460">Magnesium</keyword>
<keyword id="KW-0479">Metal-binding</keyword>
<keyword id="KW-0540">Nuclease</keyword>
<evidence type="ECO:0000255" key="1">
    <source>
        <dbReference type="HAMAP-Rule" id="MF_00042"/>
    </source>
</evidence>
<evidence type="ECO:0000255" key="2">
    <source>
        <dbReference type="PROSITE-ProRule" id="PRU00408"/>
    </source>
</evidence>
<evidence type="ECO:0000305" key="3"/>
<feature type="chain" id="PRO_0000332602" description="Ribonuclease H">
    <location>
        <begin position="1"/>
        <end position="152"/>
    </location>
</feature>
<feature type="domain" description="RNase H type-1" evidence="2">
    <location>
        <begin position="6"/>
        <end position="147"/>
    </location>
</feature>
<feature type="binding site" evidence="1">
    <location>
        <position position="15"/>
    </location>
    <ligand>
        <name>Mg(2+)</name>
        <dbReference type="ChEBI" id="CHEBI:18420"/>
        <label>1</label>
    </ligand>
</feature>
<feature type="binding site" evidence="1">
    <location>
        <position position="15"/>
    </location>
    <ligand>
        <name>Mg(2+)</name>
        <dbReference type="ChEBI" id="CHEBI:18420"/>
        <label>2</label>
    </ligand>
</feature>
<feature type="binding site" evidence="1">
    <location>
        <position position="53"/>
    </location>
    <ligand>
        <name>Mg(2+)</name>
        <dbReference type="ChEBI" id="CHEBI:18420"/>
        <label>1</label>
    </ligand>
</feature>
<feature type="binding site" evidence="1">
    <location>
        <position position="75"/>
    </location>
    <ligand>
        <name>Mg(2+)</name>
        <dbReference type="ChEBI" id="CHEBI:18420"/>
        <label>1</label>
    </ligand>
</feature>
<feature type="binding site" evidence="1">
    <location>
        <position position="139"/>
    </location>
    <ligand>
        <name>Mg(2+)</name>
        <dbReference type="ChEBI" id="CHEBI:18420"/>
        <label>2</label>
    </ligand>
</feature>
<protein>
    <recommendedName>
        <fullName evidence="1">Ribonuclease H</fullName>
        <shortName evidence="1">RNase H</shortName>
        <ecNumber evidence="1">3.1.26.4</ecNumber>
    </recommendedName>
</protein>
<organism>
    <name type="scientific">Francisella tularensis subsp. tularensis (strain FSC 198)</name>
    <dbReference type="NCBI Taxonomy" id="393115"/>
    <lineage>
        <taxon>Bacteria</taxon>
        <taxon>Pseudomonadati</taxon>
        <taxon>Pseudomonadota</taxon>
        <taxon>Gammaproteobacteria</taxon>
        <taxon>Thiotrichales</taxon>
        <taxon>Francisellaceae</taxon>
        <taxon>Francisella</taxon>
    </lineage>
</organism>
<name>RNH_FRAT1</name>
<sequence length="152" mass="16976">MEIFKKKNRVIAYTDGACKGNPGIGGWGAILSYNGVDKEIYGSEKDTTNNRMELMAAIKTLQALKRKCDITIYTDSKYLQNGINEWLANWKANGWKTAAKKEVKNKDLWQELDSLTNKHNVTWGWVKGHSGNAGNEKADELANKAIAELIGK</sequence>
<reference key="1">
    <citation type="journal article" date="2007" name="PLoS ONE">
        <title>Genome sequencing shows that European isolates of Francisella tularensis subspecies tularensis are almost identical to US laboratory strain Schu S4.</title>
        <authorList>
            <person name="Chaudhuri R.R."/>
            <person name="Ren C.-P."/>
            <person name="Desmond L."/>
            <person name="Vincent G.A."/>
            <person name="Silman N.J."/>
            <person name="Brehm J.K."/>
            <person name="Elmore M.J."/>
            <person name="Hudson M.J."/>
            <person name="Forsman M."/>
            <person name="Isherwood K.E."/>
            <person name="Gurycova D."/>
            <person name="Minton N.P."/>
            <person name="Titball R.W."/>
            <person name="Pallen M.J."/>
            <person name="Vipond R."/>
        </authorList>
    </citation>
    <scope>NUCLEOTIDE SEQUENCE [LARGE SCALE GENOMIC DNA]</scope>
    <source>
        <strain>FSC 198</strain>
    </source>
</reference>
<proteinExistence type="inferred from homology"/>
<comment type="function">
    <text evidence="1">Endonuclease that specifically degrades the RNA of RNA-DNA hybrids.</text>
</comment>
<comment type="catalytic activity">
    <reaction evidence="1">
        <text>Endonucleolytic cleavage to 5'-phosphomonoester.</text>
        <dbReference type="EC" id="3.1.26.4"/>
    </reaction>
</comment>
<comment type="cofactor">
    <cofactor evidence="1">
        <name>Mg(2+)</name>
        <dbReference type="ChEBI" id="CHEBI:18420"/>
    </cofactor>
    <text evidence="1">Binds 1 Mg(2+) ion per subunit. May bind a second metal ion at a regulatory site, or after substrate binding.</text>
</comment>
<comment type="subunit">
    <text evidence="1">Monomer.</text>
</comment>
<comment type="subcellular location">
    <subcellularLocation>
        <location evidence="1">Cytoplasm</location>
    </subcellularLocation>
</comment>
<comment type="similarity">
    <text evidence="1">Belongs to the RNase H family.</text>
</comment>
<comment type="sequence caution" evidence="3">
    <conflict type="erroneous initiation">
        <sequence resource="EMBL-CDS" id="CAL08606"/>
    </conflict>
</comment>